<keyword id="KW-0238">DNA-binding</keyword>
<keyword id="KW-0539">Nucleus</keyword>
<keyword id="KW-0804">Transcription</keyword>
<keyword id="KW-0805">Transcription regulation</keyword>
<proteinExistence type="inferred from homology"/>
<accession>O94160</accession>
<reference key="1">
    <citation type="journal article" date="2000" name="Mol. Plant Microbe Interact.">
        <title>Mating-type genes from asexual phytopathogenic ascomycetes Fusarium oxysporum and Alternaria alternata.</title>
        <authorList>
            <person name="Arie T."/>
            <person name="Kaneko I."/>
            <person name="Yoshida T."/>
            <person name="Noguchi M."/>
            <person name="Nomura Y."/>
            <person name="Yamaguchi I."/>
        </authorList>
    </citation>
    <scope>NUCLEOTIDE SEQUENCE [GENOMIC DNA]</scope>
    <source>
        <strain>Japanese pear pathotype 15A</strain>
    </source>
</reference>
<protein>
    <recommendedName>
        <fullName>Mating-type protein MAT-1</fullName>
    </recommendedName>
</protein>
<dbReference type="EMBL" id="AB009451">
    <property type="protein sequence ID" value="BAA75907.1"/>
    <property type="molecule type" value="Genomic_DNA"/>
</dbReference>
<dbReference type="VEuPathDB" id="FungiDB:CC77DRAFT_5302"/>
<dbReference type="GO" id="GO:0005634">
    <property type="term" value="C:nucleus"/>
    <property type="evidence" value="ECO:0007669"/>
    <property type="project" value="UniProtKB-SubCell"/>
</dbReference>
<dbReference type="GO" id="GO:0008301">
    <property type="term" value="F:DNA binding, bending"/>
    <property type="evidence" value="ECO:0007669"/>
    <property type="project" value="InterPro"/>
</dbReference>
<dbReference type="GO" id="GO:0045895">
    <property type="term" value="P:positive regulation of mating-type specific transcription, DNA-templated"/>
    <property type="evidence" value="ECO:0007669"/>
    <property type="project" value="InterPro"/>
</dbReference>
<dbReference type="InterPro" id="IPR006856">
    <property type="entry name" value="MATalpha_HMGbox"/>
</dbReference>
<dbReference type="Pfam" id="PF04769">
    <property type="entry name" value="MATalpha_HMGbox"/>
    <property type="match status" value="1"/>
</dbReference>
<dbReference type="PROSITE" id="PS51325">
    <property type="entry name" value="ALPHA_BOX"/>
    <property type="match status" value="1"/>
</dbReference>
<sequence length="389" mass="42511">MDTAGFVSRLLRNPAEAEVDRFLQTRSGKQMVQLFRLIPEPAAQAALTARLLLLAPQVMSGRHRFVAPEKAKKALNAFVGFRCYYISIPHFKSWPMKKLSNLIGLLWETDPNKSLWSLMTKAWSAIRDQIGKDRAPLDQFFSLICPHLNMPAPESYLAVLGWSVSINEEGDPTISHDGSSRSACVGAGLSDTALSVQDIIAYVQSMGYASTYVADVNTTSPTFLGHSVTSTAEKSNLAGAATPAVAPATDRRITARNKRRAKRELAKVTGLRANLEQDILNAHRVDPGRAGEYMPDHYPTPAAVNYDPIPFYDQLVGYFDSPIPNFQDDAAMSSGATLIDATPVSDDTLHGEMDDIVSNAAFFQSDFDAFRSGANEDATLPTFDDVFNA</sequence>
<feature type="chain" id="PRO_0000206006" description="Mating-type protein MAT-1">
    <location>
        <begin position="1"/>
        <end position="389"/>
    </location>
</feature>
<feature type="DNA-binding region" description="Alpha box" evidence="2">
    <location>
        <begin position="70"/>
        <end position="127"/>
    </location>
</feature>
<gene>
    <name type="primary">MAT1</name>
</gene>
<evidence type="ECO:0000250" key="1">
    <source>
        <dbReference type="UniProtKB" id="P0CY06"/>
    </source>
</evidence>
<evidence type="ECO:0000255" key="2">
    <source>
        <dbReference type="PROSITE-ProRule" id="PRU00655"/>
    </source>
</evidence>
<name>MAT1_ALTAL</name>
<organism>
    <name type="scientific">Alternaria alternata</name>
    <name type="common">Alternaria rot fungus</name>
    <name type="synonym">Torula alternata</name>
    <dbReference type="NCBI Taxonomy" id="5599"/>
    <lineage>
        <taxon>Eukaryota</taxon>
        <taxon>Fungi</taxon>
        <taxon>Dikarya</taxon>
        <taxon>Ascomycota</taxon>
        <taxon>Pezizomycotina</taxon>
        <taxon>Dothideomycetes</taxon>
        <taxon>Pleosporomycetidae</taxon>
        <taxon>Pleosporales</taxon>
        <taxon>Pleosporineae</taxon>
        <taxon>Pleosporaceae</taxon>
        <taxon>Alternaria</taxon>
        <taxon>Alternaria sect. Alternaria</taxon>
        <taxon>Alternaria alternata complex</taxon>
    </lineage>
</organism>
<comment type="function">
    <text evidence="1">Mating type proteins are sequence specific DNA-binding proteins that act as master switches in fungal differentiation by controlling gene expression in a cell type-specific fashion. Transcriptional activator that induces the transcription of alpha-specific genes.</text>
</comment>
<comment type="subcellular location">
    <subcellularLocation>
        <location evidence="2">Nucleus</location>
    </subcellularLocation>
</comment>
<comment type="similarity">
    <text evidence="2">Belongs to the MATALPHA1 family.</text>
</comment>